<accession>Q65249</accession>
<gene>
    <name type="ordered locus">Mal-144</name>
    <name type="ORF">k7L</name>
</gene>
<evidence type="ECO:0000305" key="1"/>
<name>VF267_ASFM2</name>
<comment type="induction">
    <text evidence="1">Expressed in the early phase of the viral replicative cycle.</text>
</comment>
<comment type="similarity">
    <text evidence="1">Belongs to the asfivirus I267L family.</text>
</comment>
<protein>
    <recommendedName>
        <fullName>Protein I267L</fullName>
        <shortName>pI267L</shortName>
    </recommendedName>
</protein>
<dbReference type="EMBL" id="X71982">
    <property type="protein sequence ID" value="CAA50845.1"/>
    <property type="molecule type" value="Genomic_DNA"/>
</dbReference>
<dbReference type="EMBL" id="AY261361">
    <property type="status" value="NOT_ANNOTATED_CDS"/>
    <property type="molecule type" value="Genomic_DNA"/>
</dbReference>
<dbReference type="Proteomes" id="UP000000860">
    <property type="component" value="Segment"/>
</dbReference>
<dbReference type="GO" id="GO:0039540">
    <property type="term" value="P:symbiont-mediated suppression of host cytoplasmic pattern recognition receptor signaling pathway via inhibition of RIG-I activity"/>
    <property type="evidence" value="ECO:0007669"/>
    <property type="project" value="UniProtKB-KW"/>
</dbReference>
<proteinExistence type="inferred from homology"/>
<keyword id="KW-0244">Early protein</keyword>
<keyword id="KW-0945">Host-virus interaction</keyword>
<keyword id="KW-1090">Inhibition of host innate immune response by virus</keyword>
<keyword id="KW-1088">Inhibition of host RIG-I by virus</keyword>
<keyword id="KW-1113">Inhibition of host RLR pathway by virus</keyword>
<keyword id="KW-0899">Viral immunoevasion</keyword>
<sequence>MLLVLIDVDGFMGQLYNENGTQTILIPREAVIFYWEKNTAFNILQLFFHGGIDTIFEKTNQRSFSFQSRHIHHFTLDESPLPNSITLPTDTLQAFKACKKIIFQHLVKITKDHEQILLLHKGGPEGEWVRSFNIPNATVQNLNDLCCPSVEKLVLKKKDYISSSIGCPKHIQGSNHCPIFECHVLFKWIQENTFIAQGVLERSSLSYEEAVLFIEHRINMVDNHPFKKDSIKQNQKKKNWIATQFVQHGIYVDNGILTKIYNKYSLF</sequence>
<organism>
    <name type="scientific">African swine fever virus (isolate Tick/Malawi/Lil 20-1/1983)</name>
    <name type="common">ASFV</name>
    <dbReference type="NCBI Taxonomy" id="10500"/>
    <lineage>
        <taxon>Viruses</taxon>
        <taxon>Varidnaviria</taxon>
        <taxon>Bamfordvirae</taxon>
        <taxon>Nucleocytoviricota</taxon>
        <taxon>Pokkesviricetes</taxon>
        <taxon>Asfuvirales</taxon>
        <taxon>Asfarviridae</taxon>
        <taxon>Asfivirus</taxon>
        <taxon>African swine fever virus</taxon>
    </lineage>
</organism>
<feature type="chain" id="PRO_0000373626" description="Protein I267L">
    <location>
        <begin position="1"/>
        <end position="267"/>
    </location>
</feature>
<reference key="1">
    <citation type="journal article" date="1994" name="J. Gen. Virol.">
        <title>Nucleotide sequence of a 55 kbp region from the right end of the genome of a pathogenic African swine fever virus isolate (Malawi LIL20/1).</title>
        <authorList>
            <person name="Dixon L.K."/>
            <person name="Twigg S.R.F."/>
            <person name="Baylis S.A."/>
            <person name="Vydelingum S."/>
            <person name="Bristow C."/>
            <person name="Hammond J.M."/>
            <person name="Smith G.L."/>
        </authorList>
    </citation>
    <scope>NUCLEOTIDE SEQUENCE [GENOMIC DNA]</scope>
</reference>
<reference key="2">
    <citation type="submission" date="2003-03" db="EMBL/GenBank/DDBJ databases">
        <title>African swine fever virus genomes.</title>
        <authorList>
            <person name="Kutish G.F."/>
            <person name="Rock D.L."/>
        </authorList>
    </citation>
    <scope>NUCLEOTIDE SEQUENCE [LARGE SCALE GENOMIC DNA]</scope>
</reference>
<organismHost>
    <name type="scientific">Ornithodoros</name>
    <name type="common">relapsing fever ticks</name>
    <dbReference type="NCBI Taxonomy" id="6937"/>
</organismHost>
<organismHost>
    <name type="scientific">Phacochoerus aethiopicus</name>
    <name type="common">Warthog</name>
    <dbReference type="NCBI Taxonomy" id="85517"/>
</organismHost>
<organismHost>
    <name type="scientific">Phacochoerus africanus</name>
    <name type="common">Warthog</name>
    <dbReference type="NCBI Taxonomy" id="41426"/>
</organismHost>
<organismHost>
    <name type="scientific">Potamochoerus larvatus</name>
    <name type="common">Bushpig</name>
    <dbReference type="NCBI Taxonomy" id="273792"/>
</organismHost>
<organismHost>
    <name type="scientific">Sus scrofa</name>
    <name type="common">Pig</name>
    <dbReference type="NCBI Taxonomy" id="9823"/>
</organismHost>